<evidence type="ECO:0000255" key="1">
    <source>
        <dbReference type="HAMAP-Rule" id="MF_00787"/>
    </source>
</evidence>
<evidence type="ECO:0007829" key="2">
    <source>
        <dbReference type="PDB" id="1SR8"/>
    </source>
</evidence>
<name>CBID_ARCFU</name>
<organism>
    <name type="scientific">Archaeoglobus fulgidus (strain ATCC 49558 / DSM 4304 / JCM 9628 / NBRC 100126 / VC-16)</name>
    <dbReference type="NCBI Taxonomy" id="224325"/>
    <lineage>
        <taxon>Archaea</taxon>
        <taxon>Methanobacteriati</taxon>
        <taxon>Methanobacteriota</taxon>
        <taxon>Archaeoglobi</taxon>
        <taxon>Archaeoglobales</taxon>
        <taxon>Archaeoglobaceae</taxon>
        <taxon>Archaeoglobus</taxon>
    </lineage>
</organism>
<keyword id="KW-0002">3D-structure</keyword>
<keyword id="KW-0169">Cobalamin biosynthesis</keyword>
<keyword id="KW-0489">Methyltransferase</keyword>
<keyword id="KW-1185">Reference proteome</keyword>
<keyword id="KW-0949">S-adenosyl-L-methionine</keyword>
<keyword id="KW-0808">Transferase</keyword>
<sequence length="298" mass="33163">MLIDPIELYRYPEKWIKDRDAEKKVRSGLYILTEDGYLRRGITTGTTASAAAVAAIASLKEKVEKVKVSTPAGVDVEVEVEAEKGFARVRKFSGDHEFDVTNGIIFEAEVCETSGIFFGRGVGVKAGEKAVSRSAKLQILENFIKASREFNFSGGVRISVPDGEEVAKKTGNEKVGIKGGISILGTTGFVEPWCKKLVETKLKIAMQYHRIAITTGRKAWLYARKKFPEYQPFVFGVHIDEALKHPGEKIIVGFPGLLKIWAGSRDRIEERAREEGVRVVVIEDDMDSWVWDVQGTDH</sequence>
<comment type="function">
    <text evidence="1">Catalyzes the methylation of C-1 in cobalt-precorrin-5B to form cobalt-precorrin-6A.</text>
</comment>
<comment type="catalytic activity">
    <reaction evidence="1">
        <text>Co-precorrin-5B + S-adenosyl-L-methionine = Co-precorrin-6A + S-adenosyl-L-homocysteine</text>
        <dbReference type="Rhea" id="RHEA:26285"/>
        <dbReference type="ChEBI" id="CHEBI:57856"/>
        <dbReference type="ChEBI" id="CHEBI:59789"/>
        <dbReference type="ChEBI" id="CHEBI:60063"/>
        <dbReference type="ChEBI" id="CHEBI:60064"/>
        <dbReference type="EC" id="2.1.1.195"/>
    </reaction>
</comment>
<comment type="pathway">
    <text evidence="1">Cofactor biosynthesis; adenosylcobalamin biosynthesis; cob(II)yrinate a,c-diamide from sirohydrochlorin (anaerobic route): step 6/10.</text>
</comment>
<comment type="similarity">
    <text evidence="1">Belongs to the CbiD family.</text>
</comment>
<gene>
    <name evidence="1" type="primary">cbiD</name>
    <name type="ordered locus">AF_0723</name>
</gene>
<reference key="1">
    <citation type="journal article" date="1997" name="Nature">
        <title>The complete genome sequence of the hyperthermophilic, sulphate-reducing archaeon Archaeoglobus fulgidus.</title>
        <authorList>
            <person name="Klenk H.-P."/>
            <person name="Clayton R.A."/>
            <person name="Tomb J.-F."/>
            <person name="White O."/>
            <person name="Nelson K.E."/>
            <person name="Ketchum K.A."/>
            <person name="Dodson R.J."/>
            <person name="Gwinn M.L."/>
            <person name="Hickey E.K."/>
            <person name="Peterson J.D."/>
            <person name="Richardson D.L."/>
            <person name="Kerlavage A.R."/>
            <person name="Graham D.E."/>
            <person name="Kyrpides N.C."/>
            <person name="Fleischmann R.D."/>
            <person name="Quackenbush J."/>
            <person name="Lee N.H."/>
            <person name="Sutton G.G."/>
            <person name="Gill S.R."/>
            <person name="Kirkness E.F."/>
            <person name="Dougherty B.A."/>
            <person name="McKenney K."/>
            <person name="Adams M.D."/>
            <person name="Loftus B.J."/>
            <person name="Peterson S.N."/>
            <person name="Reich C.I."/>
            <person name="McNeil L.K."/>
            <person name="Badger J.H."/>
            <person name="Glodek A."/>
            <person name="Zhou L."/>
            <person name="Overbeek R."/>
            <person name="Gocayne J.D."/>
            <person name="Weidman J.F."/>
            <person name="McDonald L.A."/>
            <person name="Utterback T.R."/>
            <person name="Cotton M.D."/>
            <person name="Spriggs T."/>
            <person name="Artiach P."/>
            <person name="Kaine B.P."/>
            <person name="Sykes S.M."/>
            <person name="Sadow P.W."/>
            <person name="D'Andrea K.P."/>
            <person name="Bowman C."/>
            <person name="Fujii C."/>
            <person name="Garland S.A."/>
            <person name="Mason T.M."/>
            <person name="Olsen G.J."/>
            <person name="Fraser C.M."/>
            <person name="Smith H.O."/>
            <person name="Woese C.R."/>
            <person name="Venter J.C."/>
        </authorList>
    </citation>
    <scope>NUCLEOTIDE SEQUENCE [LARGE SCALE GENOMIC DNA]</scope>
    <source>
        <strain>ATCC 49558 / DSM 4304 / JCM 9628 / NBRC 100126 / VC-16</strain>
    </source>
</reference>
<protein>
    <recommendedName>
        <fullName evidence="1">Cobalt-precorrin-5B C(1)-methyltransferase</fullName>
        <ecNumber evidence="1">2.1.1.195</ecNumber>
    </recommendedName>
    <alternativeName>
        <fullName evidence="1">Cobalt-precorrin-6A synthase</fullName>
    </alternativeName>
</protein>
<proteinExistence type="evidence at protein level"/>
<accession>O29535</accession>
<dbReference type="EC" id="2.1.1.195" evidence="1"/>
<dbReference type="EMBL" id="AE000782">
    <property type="protein sequence ID" value="AAB90519.1"/>
    <property type="molecule type" value="Genomic_DNA"/>
</dbReference>
<dbReference type="PIR" id="C69340">
    <property type="entry name" value="C69340"/>
</dbReference>
<dbReference type="RefSeq" id="WP_010878226.1">
    <property type="nucleotide sequence ID" value="NC_000917.1"/>
</dbReference>
<dbReference type="PDB" id="1SR8">
    <property type="method" value="X-ray"/>
    <property type="resolution" value="1.90 A"/>
    <property type="chains" value="A=1-298"/>
</dbReference>
<dbReference type="PDBsum" id="1SR8"/>
<dbReference type="SMR" id="O29535"/>
<dbReference type="STRING" id="224325.AF_0723"/>
<dbReference type="PaxDb" id="224325-AF_0723"/>
<dbReference type="EnsemblBacteria" id="AAB90519">
    <property type="protein sequence ID" value="AAB90519"/>
    <property type="gene ID" value="AF_0723"/>
</dbReference>
<dbReference type="KEGG" id="afu:AF_0723"/>
<dbReference type="eggNOG" id="arCOG04383">
    <property type="taxonomic scope" value="Archaea"/>
</dbReference>
<dbReference type="HOGENOM" id="CLU_820433_0_0_2"/>
<dbReference type="OrthoDB" id="10423at2157"/>
<dbReference type="PhylomeDB" id="O29535"/>
<dbReference type="UniPathway" id="UPA00148">
    <property type="reaction ID" value="UER00227"/>
</dbReference>
<dbReference type="EvolutionaryTrace" id="O29535"/>
<dbReference type="Proteomes" id="UP000002199">
    <property type="component" value="Chromosome"/>
</dbReference>
<dbReference type="GO" id="GO:0043780">
    <property type="term" value="F:cobalt-precorrin-5B C1-methyltransferase activity"/>
    <property type="evidence" value="ECO:0007669"/>
    <property type="project" value="RHEA"/>
</dbReference>
<dbReference type="GO" id="GO:0019251">
    <property type="term" value="P:anaerobic cobalamin biosynthetic process"/>
    <property type="evidence" value="ECO:0007669"/>
    <property type="project" value="UniProtKB-UniRule"/>
</dbReference>
<dbReference type="GO" id="GO:0032259">
    <property type="term" value="P:methylation"/>
    <property type="evidence" value="ECO:0007669"/>
    <property type="project" value="UniProtKB-KW"/>
</dbReference>
<dbReference type="Gene3D" id="3.30.1990.10">
    <property type="entry name" value="CbiD-like"/>
    <property type="match status" value="1"/>
</dbReference>
<dbReference type="Gene3D" id="3.30.2110.10">
    <property type="entry name" value="CbiD-like"/>
    <property type="match status" value="1"/>
</dbReference>
<dbReference type="Gene3D" id="3.40.50.10720">
    <property type="entry name" value="CbiD-like domains"/>
    <property type="match status" value="1"/>
</dbReference>
<dbReference type="HAMAP" id="MF_00787">
    <property type="entry name" value="CbiD"/>
    <property type="match status" value="1"/>
</dbReference>
<dbReference type="InterPro" id="IPR002748">
    <property type="entry name" value="CbiD"/>
</dbReference>
<dbReference type="InterPro" id="IPR036074">
    <property type="entry name" value="CbiD_sf"/>
</dbReference>
<dbReference type="NCBIfam" id="NF000853">
    <property type="entry name" value="PRK00075.2-2"/>
    <property type="match status" value="1"/>
</dbReference>
<dbReference type="PANTHER" id="PTHR35863">
    <property type="entry name" value="COBALT-PRECORRIN-5B C(1)-METHYLTRANSFERASE"/>
    <property type="match status" value="1"/>
</dbReference>
<dbReference type="PANTHER" id="PTHR35863:SF1">
    <property type="entry name" value="COBALT-PRECORRIN-5B C(1)-METHYLTRANSFERASE"/>
    <property type="match status" value="1"/>
</dbReference>
<dbReference type="Pfam" id="PF01888">
    <property type="entry name" value="CbiD"/>
    <property type="match status" value="1"/>
</dbReference>
<dbReference type="SUPFAM" id="SSF111342">
    <property type="entry name" value="CbiD-like"/>
    <property type="match status" value="1"/>
</dbReference>
<feature type="chain" id="PRO_0000141690" description="Cobalt-precorrin-5B C(1)-methyltransferase">
    <location>
        <begin position="1"/>
        <end position="298"/>
    </location>
</feature>
<feature type="turn" evidence="2">
    <location>
        <begin position="5"/>
        <end position="7"/>
    </location>
</feature>
<feature type="helix" evidence="2">
    <location>
        <begin position="13"/>
        <end position="15"/>
    </location>
</feature>
<feature type="helix" evidence="2">
    <location>
        <begin position="21"/>
        <end position="26"/>
    </location>
</feature>
<feature type="strand" evidence="2">
    <location>
        <begin position="29"/>
        <end position="33"/>
    </location>
</feature>
<feature type="strand" evidence="2">
    <location>
        <begin position="36"/>
        <end position="39"/>
    </location>
</feature>
<feature type="helix" evidence="2">
    <location>
        <begin position="44"/>
        <end position="57"/>
    </location>
</feature>
<feature type="helix" evidence="2">
    <location>
        <begin position="58"/>
        <end position="60"/>
    </location>
</feature>
<feature type="strand" evidence="2">
    <location>
        <begin position="63"/>
        <end position="68"/>
    </location>
</feature>
<feature type="strand" evidence="2">
    <location>
        <begin position="76"/>
        <end position="83"/>
    </location>
</feature>
<feature type="strand" evidence="2">
    <location>
        <begin position="86"/>
        <end position="90"/>
    </location>
</feature>
<feature type="turn" evidence="2">
    <location>
        <begin position="100"/>
        <end position="103"/>
    </location>
</feature>
<feature type="strand" evidence="2">
    <location>
        <begin position="105"/>
        <end position="113"/>
    </location>
</feature>
<feature type="strand" evidence="2">
    <location>
        <begin position="115"/>
        <end position="118"/>
    </location>
</feature>
<feature type="helix" evidence="2">
    <location>
        <begin position="133"/>
        <end position="149"/>
    </location>
</feature>
<feature type="strand" evidence="2">
    <location>
        <begin position="154"/>
        <end position="159"/>
    </location>
</feature>
<feature type="helix" evidence="2">
    <location>
        <begin position="163"/>
        <end position="168"/>
    </location>
</feature>
<feature type="helix" evidence="2">
    <location>
        <begin position="172"/>
        <end position="175"/>
    </location>
</feature>
<feature type="strand" evidence="2">
    <location>
        <begin position="178"/>
        <end position="181"/>
    </location>
</feature>
<feature type="strand" evidence="2">
    <location>
        <begin position="186"/>
        <end position="190"/>
    </location>
</feature>
<feature type="helix" evidence="2">
    <location>
        <begin position="195"/>
        <end position="204"/>
    </location>
</feature>
<feature type="helix" evidence="2">
    <location>
        <begin position="205"/>
        <end position="207"/>
    </location>
</feature>
<feature type="strand" evidence="2">
    <location>
        <begin position="209"/>
        <end position="216"/>
    </location>
</feature>
<feature type="helix" evidence="2">
    <location>
        <begin position="217"/>
        <end position="226"/>
    </location>
</feature>
<feature type="strand" evidence="2">
    <location>
        <begin position="230"/>
        <end position="234"/>
    </location>
</feature>
<feature type="helix" evidence="2">
    <location>
        <begin position="239"/>
        <end position="242"/>
    </location>
</feature>
<feature type="strand" evidence="2">
    <location>
        <begin position="246"/>
        <end position="253"/>
    </location>
</feature>
<feature type="helix" evidence="2">
    <location>
        <begin position="255"/>
        <end position="262"/>
    </location>
</feature>
<feature type="helix" evidence="2">
    <location>
        <begin position="265"/>
        <end position="273"/>
    </location>
</feature>
<feature type="turn" evidence="2">
    <location>
        <begin position="274"/>
        <end position="276"/>
    </location>
</feature>
<feature type="strand" evidence="2">
    <location>
        <begin position="278"/>
        <end position="281"/>
    </location>
</feature>